<organism>
    <name type="scientific">Homo sapiens</name>
    <name type="common">Human</name>
    <dbReference type="NCBI Taxonomy" id="9606"/>
    <lineage>
        <taxon>Eukaryota</taxon>
        <taxon>Metazoa</taxon>
        <taxon>Chordata</taxon>
        <taxon>Craniata</taxon>
        <taxon>Vertebrata</taxon>
        <taxon>Euteleostomi</taxon>
        <taxon>Mammalia</taxon>
        <taxon>Eutheria</taxon>
        <taxon>Euarchontoglires</taxon>
        <taxon>Primates</taxon>
        <taxon>Haplorrhini</taxon>
        <taxon>Catarrhini</taxon>
        <taxon>Hominidae</taxon>
        <taxon>Homo</taxon>
    </lineage>
</organism>
<reference key="1">
    <citation type="journal article" date="1999" name="Oncogene">
        <title>Isolation of DICE1: a gene frequently affected by LOH and downregulated in lung carcinomas.</title>
        <authorList>
            <person name="Wieland I."/>
            <person name="Arden K.C."/>
            <person name="Michels D."/>
            <person name="Klein-Hitpass L."/>
            <person name="Boehm M."/>
            <person name="Viars C.S."/>
            <person name="Weidle U.H."/>
        </authorList>
    </citation>
    <scope>NUCLEOTIDE SEQUENCE [MRNA] (ISOFORM 1)</scope>
    <scope>TISSUE SPECIFICITY</scope>
    <source>
        <tissue>Brain</tissue>
    </source>
</reference>
<reference key="2">
    <citation type="journal article" date="2007" name="BMC Genomics">
        <title>The full-ORF clone resource of the German cDNA consortium.</title>
        <authorList>
            <person name="Bechtel S."/>
            <person name="Rosenfelder H."/>
            <person name="Duda A."/>
            <person name="Schmidt C.P."/>
            <person name="Ernst U."/>
            <person name="Wellenreuther R."/>
            <person name="Mehrle A."/>
            <person name="Schuster C."/>
            <person name="Bahr A."/>
            <person name="Bloecker H."/>
            <person name="Heubner D."/>
            <person name="Hoerlein A."/>
            <person name="Michel G."/>
            <person name="Wedler H."/>
            <person name="Koehrer K."/>
            <person name="Ottenwaelder B."/>
            <person name="Poustka A."/>
            <person name="Wiemann S."/>
            <person name="Schupp I."/>
        </authorList>
    </citation>
    <scope>NUCLEOTIDE SEQUENCE [LARGE SCALE MRNA] (ISOFORM 3)</scope>
    <scope>NUCLEOTIDE SEQUENCE [LARGE SCALE MRNA] OF 415-887 (ISOFORM 1)</scope>
    <source>
        <tissue>Testis</tissue>
    </source>
</reference>
<reference key="3">
    <citation type="journal article" date="2004" name="Nature">
        <title>The DNA sequence and analysis of human chromosome 13.</title>
        <authorList>
            <person name="Dunham A."/>
            <person name="Matthews L.H."/>
            <person name="Burton J."/>
            <person name="Ashurst J.L."/>
            <person name="Howe K.L."/>
            <person name="Ashcroft K.J."/>
            <person name="Beare D.M."/>
            <person name="Burford D.C."/>
            <person name="Hunt S.E."/>
            <person name="Griffiths-Jones S."/>
            <person name="Jones M.C."/>
            <person name="Keenan S.J."/>
            <person name="Oliver K."/>
            <person name="Scott C.E."/>
            <person name="Ainscough R."/>
            <person name="Almeida J.P."/>
            <person name="Ambrose K.D."/>
            <person name="Andrews D.T."/>
            <person name="Ashwell R.I.S."/>
            <person name="Babbage A.K."/>
            <person name="Bagguley C.L."/>
            <person name="Bailey J."/>
            <person name="Bannerjee R."/>
            <person name="Barlow K.F."/>
            <person name="Bates K."/>
            <person name="Beasley H."/>
            <person name="Bird C.P."/>
            <person name="Bray-Allen S."/>
            <person name="Brown A.J."/>
            <person name="Brown J.Y."/>
            <person name="Burrill W."/>
            <person name="Carder C."/>
            <person name="Carter N.P."/>
            <person name="Chapman J.C."/>
            <person name="Clamp M.E."/>
            <person name="Clark S.Y."/>
            <person name="Clarke G."/>
            <person name="Clee C.M."/>
            <person name="Clegg S.C."/>
            <person name="Cobley V."/>
            <person name="Collins J.E."/>
            <person name="Corby N."/>
            <person name="Coville G.J."/>
            <person name="Deloukas P."/>
            <person name="Dhami P."/>
            <person name="Dunham I."/>
            <person name="Dunn M."/>
            <person name="Earthrowl M.E."/>
            <person name="Ellington A.G."/>
            <person name="Faulkner L."/>
            <person name="Frankish A.G."/>
            <person name="Frankland J."/>
            <person name="French L."/>
            <person name="Garner P."/>
            <person name="Garnett J."/>
            <person name="Gilbert J.G.R."/>
            <person name="Gilson C.J."/>
            <person name="Ghori J."/>
            <person name="Grafham D.V."/>
            <person name="Gribble S.M."/>
            <person name="Griffiths C."/>
            <person name="Hall R.E."/>
            <person name="Hammond S."/>
            <person name="Harley J.L."/>
            <person name="Hart E.A."/>
            <person name="Heath P.D."/>
            <person name="Howden P.J."/>
            <person name="Huckle E.J."/>
            <person name="Hunt P.J."/>
            <person name="Hunt A.R."/>
            <person name="Johnson C."/>
            <person name="Johnson D."/>
            <person name="Kay M."/>
            <person name="Kimberley A.M."/>
            <person name="King A."/>
            <person name="Laird G.K."/>
            <person name="Langford C.J."/>
            <person name="Lawlor S."/>
            <person name="Leongamornlert D.A."/>
            <person name="Lloyd D.M."/>
            <person name="Lloyd C."/>
            <person name="Loveland J.E."/>
            <person name="Lovell J."/>
            <person name="Martin S."/>
            <person name="Mashreghi-Mohammadi M."/>
            <person name="McLaren S.J."/>
            <person name="McMurray A."/>
            <person name="Milne S."/>
            <person name="Moore M.J.F."/>
            <person name="Nickerson T."/>
            <person name="Palmer S.A."/>
            <person name="Pearce A.V."/>
            <person name="Peck A.I."/>
            <person name="Pelan S."/>
            <person name="Phillimore B."/>
            <person name="Porter K.M."/>
            <person name="Rice C.M."/>
            <person name="Searle S."/>
            <person name="Sehra H.K."/>
            <person name="Shownkeen R."/>
            <person name="Skuce C.D."/>
            <person name="Smith M."/>
            <person name="Steward C.A."/>
            <person name="Sycamore N."/>
            <person name="Tester J."/>
            <person name="Thomas D.W."/>
            <person name="Tracey A."/>
            <person name="Tromans A."/>
            <person name="Tubby B."/>
            <person name="Wall M."/>
            <person name="Wallis J.M."/>
            <person name="West A.P."/>
            <person name="Whitehead S.L."/>
            <person name="Willey D.L."/>
            <person name="Wilming L."/>
            <person name="Wray P.W."/>
            <person name="Wright M.W."/>
            <person name="Young L."/>
            <person name="Coulson A."/>
            <person name="Durbin R.M."/>
            <person name="Hubbard T."/>
            <person name="Sulston J.E."/>
            <person name="Beck S."/>
            <person name="Bentley D.R."/>
            <person name="Rogers J."/>
            <person name="Ross M.T."/>
        </authorList>
    </citation>
    <scope>NUCLEOTIDE SEQUENCE [LARGE SCALE GENOMIC DNA]</scope>
</reference>
<reference key="4">
    <citation type="journal article" date="2004" name="Genome Res.">
        <title>The status, quality, and expansion of the NIH full-length cDNA project: the Mammalian Gene Collection (MGC).</title>
        <authorList>
            <consortium name="The MGC Project Team"/>
        </authorList>
    </citation>
    <scope>NUCLEOTIDE SEQUENCE [LARGE SCALE MRNA] (ISOFORMS 1 AND 2)</scope>
    <source>
        <tissue>Brain</tissue>
        <tissue>Lung</tissue>
        <tissue>Placenta</tissue>
    </source>
</reference>
<reference key="5">
    <citation type="submission" date="1999-04" db="EMBL/GenBank/DDBJ databases">
        <title>Human DBI-1 homolog.</title>
        <authorList>
            <person name="Hoff H.B. III"/>
            <person name="Oh C."/>
            <person name="Sell C."/>
        </authorList>
    </citation>
    <scope>NUCLEOTIDE SEQUENCE [MRNA] OF 273-887 (ISOFORM 1)</scope>
    <source>
        <tissue>Lung</tissue>
    </source>
</reference>
<reference key="6">
    <citation type="journal article" date="2001" name="Oncol. Res.">
        <title>Molecular characterization of the DICE1 (DDX26) tumor suppressor gene in lung carcinoma cells.</title>
        <authorList>
            <person name="Wieland I."/>
            <person name="Roepke A."/>
            <person name="Stumm M."/>
            <person name="Sell C."/>
            <person name="Weidle U.H."/>
            <person name="Wieacker P.F."/>
        </authorList>
    </citation>
    <scope>SUBCELLULAR LOCATION</scope>
</reference>
<reference key="7">
    <citation type="journal article" date="2004" name="Oncol. Rep.">
        <title>Ectopic expression of DICE1 suppresses tumor cell growth.</title>
        <authorList>
            <person name="Wieland I."/>
            <person name="Sell C."/>
            <person name="Weidle U.H."/>
            <person name="Wieacker P."/>
        </authorList>
    </citation>
    <scope>FUNCTION</scope>
</reference>
<reference key="8">
    <citation type="journal article" date="2005" name="Oncogene">
        <title>Promoter CpG hypermethylation and downregulation of DICE1 expression in prostate cancer.</title>
        <authorList>
            <person name="Roepke A."/>
            <person name="Buhtz P."/>
            <person name="Boehm M."/>
            <person name="Seger J."/>
            <person name="Wieland I."/>
            <person name="Allhoff E.P."/>
            <person name="Wieacker P.F."/>
        </authorList>
    </citation>
    <scope>INDUCTION</scope>
</reference>
<reference key="9">
    <citation type="journal article" date="2005" name="Cancer Genet. Cytogenet.">
        <title>Absence of mutations in DICE1/DDX26 gene in human cancer cell lines with frequent 13q14 deletions.</title>
        <authorList>
            <person name="Hernandez M."/>
            <person name="Papadopoulos N."/>
            <person name="Almeida T.A."/>
        </authorList>
    </citation>
    <scope>LACK OF INVOLVEMENT IN CANCER</scope>
</reference>
<reference key="10">
    <citation type="journal article" date="2005" name="Cell">
        <title>Integrator, a multiprotein mediator of small nuclear RNA processing, associates with the C-terminal repeat of RNA polymerase II.</title>
        <authorList>
            <person name="Baillat D."/>
            <person name="Hakimi M.-A."/>
            <person name="Naeaer A.M."/>
            <person name="Shilatifard A."/>
            <person name="Cooch N."/>
            <person name="Shiekhattar R."/>
        </authorList>
    </citation>
    <scope>FUNCTION</scope>
    <scope>IDENTIFICATION BY MASS SPECTROMETRY</scope>
    <scope>IDENTIFICATION IN THE INTEGRATOR COMPLEX</scope>
</reference>
<reference key="11">
    <citation type="journal article" date="2008" name="Proc. Natl. Acad. Sci. U.S.A.">
        <title>A quantitative atlas of mitotic phosphorylation.</title>
        <authorList>
            <person name="Dephoure N."/>
            <person name="Zhou C."/>
            <person name="Villen J."/>
            <person name="Beausoleil S.A."/>
            <person name="Bakalarski C.E."/>
            <person name="Elledge S.J."/>
            <person name="Gygi S.P."/>
        </authorList>
    </citation>
    <scope>PHOSPHORYLATION [LARGE SCALE ANALYSIS] AT SER-804</scope>
    <scope>IDENTIFICATION BY MASS SPECTROMETRY [LARGE SCALE ANALYSIS]</scope>
    <source>
        <tissue>Cervix carcinoma</tissue>
    </source>
</reference>
<reference key="12">
    <citation type="journal article" date="2013" name="Mol. Biol. Cell">
        <title>Nuclear-localized Asunder regulates cytoplasmic dynein localization via its role in the integrator complex.</title>
        <authorList>
            <person name="Jodoin J.N."/>
            <person name="Sitaram P."/>
            <person name="Albrecht T.R."/>
            <person name="May S.B."/>
            <person name="Shboul M."/>
            <person name="Lee E."/>
            <person name="Reversade B."/>
            <person name="Wagner E.J."/>
            <person name="Lee L.A."/>
        </authorList>
    </citation>
    <scope>FUNCTION</scope>
    <scope>SUBCELLULAR LOCATION</scope>
</reference>
<reference key="13">
    <citation type="journal article" date="2021" name="Cell">
        <title>The PP2A-Integrator-CDK9 axis fine-tunes transcription and can be targeted therapeutically in cancer.</title>
        <authorList>
            <person name="Vervoort S.J."/>
            <person name="Welsh S.A."/>
            <person name="Devlin J.R."/>
            <person name="Barbieri E."/>
            <person name="Knight D.A."/>
            <person name="Offley S."/>
            <person name="Bjelosevic S."/>
            <person name="Costacurta M."/>
            <person name="Todorovski I."/>
            <person name="Kearney C.J."/>
            <person name="Sandow J.J."/>
            <person name="Fan Z."/>
            <person name="Blyth B."/>
            <person name="McLeod V."/>
            <person name="Vissers J.H.A."/>
            <person name="Pavic K."/>
            <person name="Martin B.P."/>
            <person name="Gregory G."/>
            <person name="Demosthenous E."/>
            <person name="Zethoven M."/>
            <person name="Kong I.Y."/>
            <person name="Hawkins E.D."/>
            <person name="Hogg S.J."/>
            <person name="Kelly M.J."/>
            <person name="Newbold A."/>
            <person name="Simpson K.J."/>
            <person name="Kauko O."/>
            <person name="Harvey K.F."/>
            <person name="Ohlmeyer M."/>
            <person name="Westermarck J."/>
            <person name="Gray N."/>
            <person name="Gardini A."/>
            <person name="Johnstone R.W."/>
        </authorList>
    </citation>
    <scope>FUNCTION</scope>
    <scope>IDENTIFICATION IN THE INTAC COMPLEX</scope>
    <scope>SUBCELLULAR LOCATION</scope>
</reference>
<reference key="14">
    <citation type="journal article" date="2024" name="Mol. Cell">
        <title>Cytoplasmic binding partners of the Integrator endonuclease INTS11 and its paralog CPSF73 are required for their nuclear function.</title>
        <authorList>
            <person name="Lin M.H."/>
            <person name="Jensen M.K."/>
            <person name="Elrod N.D."/>
            <person name="Chu H.F."/>
            <person name="Haseley M."/>
            <person name="Beam A.C."/>
            <person name="Huang K.L."/>
            <person name="Chiang W."/>
            <person name="Russell W.K."/>
            <person name="Williams K."/>
            <person name="Proschel C."/>
            <person name="Wagner E.J."/>
            <person name="Tong L."/>
        </authorList>
    </citation>
    <scope>IDENTIFICATION IN THE INTEGRATOR COMPLEX</scope>
    <scope>SUBCELLULAR LOCATION</scope>
</reference>
<reference key="15">
    <citation type="journal article" date="2024" name="Mol. Cell">
        <title>Redundant pathways for removal of defective RNA polymerase II complexes at a promoter-proximal pause checkpoint.</title>
        <authorList>
            <person name="Blears D."/>
            <person name="Lou J."/>
            <person name="Fong N."/>
            <person name="Mitter R."/>
            <person name="Sheridan R.M."/>
            <person name="He D."/>
            <person name="Dirac-Svejstrup A.B."/>
            <person name="Bentley D."/>
            <person name="Svejstrup J.Q."/>
        </authorList>
    </citation>
    <scope>FUNCTION</scope>
</reference>
<reference evidence="23" key="16">
    <citation type="journal article" date="2020" name="Science">
        <title>Identification of Integrator-PP2A complex (INTAC), an RNA polymerase II phosphatase.</title>
        <authorList>
            <person name="Zheng H."/>
            <person name="Qi Y."/>
            <person name="Hu S."/>
            <person name="Cao X."/>
            <person name="Xu C."/>
            <person name="Yin Z."/>
            <person name="Chen X."/>
            <person name="Li Y."/>
            <person name="Liu W."/>
            <person name="Li J."/>
            <person name="Wang J."/>
            <person name="Wei G."/>
            <person name="Liang K."/>
            <person name="Chen F.X."/>
            <person name="Xu Y."/>
        </authorList>
    </citation>
    <scope>STRUCTURE BY ELECTRON MICROSCOPY (3.50 ANGSTROMS) OF INTAC COMPLEX</scope>
    <scope>FUNCTION</scope>
    <scope>IDENTIFICATION IN THE INTAC COMPLEX</scope>
</reference>
<reference evidence="24" key="17">
    <citation type="journal article" date="2021" name="Science">
        <title>Structural basis of Integrator-mediated transcription regulation.</title>
        <authorList>
            <person name="Fianu I."/>
            <person name="Chen Y."/>
            <person name="Dienemann C."/>
            <person name="Dybkov O."/>
            <person name="Linden A."/>
            <person name="Urlaub H."/>
            <person name="Cramer P."/>
        </authorList>
    </citation>
    <scope>STRUCTURE BY ELECTRON MICROSCOPY (3.60 ANGSTROMS) OF INTEGRATOR COMPLEX</scope>
    <scope>IDENTIFICATION IN THE INTEGRATOR COMPLEX</scope>
</reference>
<reference evidence="25" key="18">
    <citation type="journal article" date="2023" name="Protein Cell">
        <title>Structural basis of INTAC-regulated transcription.</title>
        <authorList>
            <person name="Zheng H."/>
            <person name="Jin Q."/>
            <person name="Wang X."/>
            <person name="Qi Y."/>
            <person name="Liu W."/>
            <person name="Ren Y."/>
            <person name="Zhao D."/>
            <person name="Xavier Chen F."/>
            <person name="Cheng J."/>
            <person name="Chen X."/>
            <person name="Xu Y."/>
        </authorList>
    </citation>
    <scope>STRUCTURE BY ELECTRON MICROSCOPY (4.18 ANGSTROMS) OF INTAC COMPLEX</scope>
</reference>
<reference evidence="26 27 28" key="19">
    <citation type="journal article" date="2024" name="Nature">
        <title>Structural basis of Integrator-dependent RNA polymerase II termination.</title>
        <authorList>
            <person name="Fianu I."/>
            <person name="Ochmann M."/>
            <person name="Walshe J.L."/>
            <person name="Dybkov O."/>
            <person name="Cruz J.N."/>
            <person name="Urlaub H."/>
            <person name="Cramer P."/>
        </authorList>
    </citation>
    <scope>STRUCTURE BY ELECTRON MICROSCOPY (3.10 ANGSTROMS) OF INTAC COMPLEX</scope>
    <scope>FUNCTION</scope>
    <scope>IDENTIFICATION IN THE INTAC COMPLEX</scope>
    <scope>DOMAIN</scope>
    <scope>MOTIF</scope>
</reference>
<gene>
    <name evidence="19 22" type="primary">INTS6</name>
    <name evidence="20" type="synonym">DBI1</name>
    <name evidence="16" type="synonym">DDX26</name>
    <name type="synonym">DDX26A</name>
</gene>
<accession>Q9UL03</accession>
<accession>Q0P664</accession>
<accession>Q6PJP4</accession>
<accession>Q9UFK0</accession>
<accession>Q9Y5M9</accession>
<comment type="function">
    <text evidence="4 6 7 8 9 12 14">Component of the integrator complex, a multiprotein complex that terminates RNA polymerase II (Pol II) transcription in the promoter-proximal region of genes (PubMed:33243860, PubMed:34004147, PubMed:39504960). The integrator complex provides a quality checkpoint during transcription elongation by driving premature transcription termination of transcripts that are unfavorably configured for transcriptional elongation: the complex terminates transcription by (1) catalyzing dephosphorylation of the C-terminal domain (CTD) of Pol II subunit POLR2A and SUPT5H/SPT5, (2) degrading the exiting nascent RNA transcript via endonuclease activity and (3) promoting the release of Pol II from bound DNA (PubMed:33243860, PubMed:34004147, PubMed:38570683, PubMed:39504960). The integrator complex is also involved in terminating the synthesis of non-coding Pol II transcripts, such as enhancer RNAs (eRNAs), small nuclear RNAs (snRNAs), telomerase RNAs and long non-coding RNAs (lncRNAs) (PubMed:16239144). Within the integrator complex, INTS6 acts as a molecular adapter that promotes assembly of protein phosphatase 2A (PP2A) subunits to the integrator core complex, promoting recruitment of PP2A to transcription pause-release checkpoint (PubMed:33243860, PubMed:34004147). Mediates recruitment of cytoplasmic dynein to the nuclear envelope, probably as component of the integrator complex (PubMed:23904267). May have a tumor suppressor role; an ectopic expression suppressing tumor cell growth (PubMed:15254679, PubMed:16239144).</text>
</comment>
<comment type="subunit">
    <text evidence="6 8 9 10 11 12 13">Component of the Integrator complex, composed of core subunits INTS1, INTS2, INTS3, INTS4, INTS5, INTS6, INTS7, INTS8, INTS9/RC74, INTS10, INTS11/CPSF3L, INTS12, INTS13, INTS14 and INTS15 (PubMed:16239144, PubMed:33243860, PubMed:34004147, PubMed:34762484, PubMed:38570683, PubMed:39032490). The core complex associates with protein phosphatase 2A subunits PPP2CA and PPP2R1A, to form the Integrator-PP2A (INTAC) complex (PubMed:33243860, PubMed:34004147, PubMed:34762484, PubMed:36869814, PubMed:38570683).</text>
</comment>
<comment type="interaction">
    <interactant intactId="EBI-1381827">
        <id>Q9UL03</id>
    </interactant>
    <interactant intactId="EBI-355924">
        <id>P33993</id>
        <label>MCM7</label>
    </interactant>
    <organismsDiffer>false</organismsDiffer>
    <experiments>10</experiments>
</comment>
<comment type="subcellular location">
    <subcellularLocation>
        <location evidence="3 7 9 13">Nucleus</location>
    </subcellularLocation>
    <subcellularLocation>
        <location evidence="9">Chromosome</location>
    </subcellularLocation>
    <text evidence="9">Associates with chromatin and transcription pause-release checkpoint.</text>
</comment>
<comment type="alternative products">
    <event type="alternative splicing"/>
    <isoform>
        <id>Q9UL03-1</id>
        <name>1</name>
        <sequence type="displayed"/>
    </isoform>
    <isoform>
        <id>Q9UL03-2</id>
        <name>2</name>
        <sequence type="described" ref="VSP_021457 VSP_021458"/>
    </isoform>
    <isoform>
        <id>Q9UL03-3</id>
        <name>3</name>
        <sequence type="described" ref="VSP_041356"/>
    </isoform>
</comment>
<comment type="tissue specificity">
    <text evidence="2">Widely expressed. Expressed in heart, brain, placenta, lung, liver, skeletal muscle, kidney and pancreas.</text>
</comment>
<comment type="induction">
    <text evidence="5">Frequently down-regulated in nonsmall cell lung carcinomas and prostate cancers. Down-regulation in prostate cancer is due to CpG hypermethylation of its promoter. However, some involvement in cancer is unclear.</text>
</comment>
<comment type="domain">
    <text evidence="12">The inhibitory loop acts as a regulator of protein phosphatase 2A (PP2A) activity: Asp-629 and Glu-630 residues mimic phosphoserine and phosphothreonine residues and bind to the PP2A catalytic subunit PPP2CA active site to block substrate-binding.</text>
</comment>
<comment type="similarity">
    <text evidence="21">Belongs to the Integrator subunit 6 family.</text>
</comment>
<comment type="sequence caution" evidence="21">
    <conflict type="miscellaneous discrepancy">
        <sequence resource="EMBL-CDS" id="AAH13358"/>
    </conflict>
    <text>Contaminating sequence. Potential poly-A sequence.</text>
</comment>
<comment type="sequence caution" evidence="21">
    <conflict type="erroneous termination">
        <sequence resource="EMBL" id="AL833524"/>
    </conflict>
    <text>Truncated C-terminus.</text>
</comment>
<comment type="sequence caution" evidence="21">
    <conflict type="erroneous initiation">
        <sequence resource="EMBL-CDS" id="CAB56020"/>
    </conflict>
    <text>Extended N-terminus.</text>
</comment>
<comment type="online information" name="Atlas of Genetics and Cytogenetics in Oncology and Haematology">
    <link uri="https://atlasgeneticsoncology.org/gene/40287/INTS6"/>
</comment>
<evidence type="ECO:0000255" key="1">
    <source>
        <dbReference type="PROSITE-ProRule" id="PRU00219"/>
    </source>
</evidence>
<evidence type="ECO:0000269" key="2">
    <source>
    </source>
</evidence>
<evidence type="ECO:0000269" key="3">
    <source>
    </source>
</evidence>
<evidence type="ECO:0000269" key="4">
    <source>
    </source>
</evidence>
<evidence type="ECO:0000269" key="5">
    <source>
    </source>
</evidence>
<evidence type="ECO:0000269" key="6">
    <source>
    </source>
</evidence>
<evidence type="ECO:0000269" key="7">
    <source>
    </source>
</evidence>
<evidence type="ECO:0000269" key="8">
    <source>
    </source>
</evidence>
<evidence type="ECO:0000269" key="9">
    <source>
    </source>
</evidence>
<evidence type="ECO:0000269" key="10">
    <source>
    </source>
</evidence>
<evidence type="ECO:0000269" key="11">
    <source>
    </source>
</evidence>
<evidence type="ECO:0000269" key="12">
    <source>
    </source>
</evidence>
<evidence type="ECO:0000269" key="13">
    <source>
    </source>
</evidence>
<evidence type="ECO:0000269" key="14">
    <source>
    </source>
</evidence>
<evidence type="ECO:0000303" key="15">
    <source>
    </source>
</evidence>
<evidence type="ECO:0000303" key="16">
    <source>
    </source>
</evidence>
<evidence type="ECO:0000303" key="17">
    <source>
    </source>
</evidence>
<evidence type="ECO:0000303" key="18">
    <source>
    </source>
</evidence>
<evidence type="ECO:0000303" key="19">
    <source>
    </source>
</evidence>
<evidence type="ECO:0000303" key="20">
    <source ref="5"/>
</evidence>
<evidence type="ECO:0000305" key="21"/>
<evidence type="ECO:0000312" key="22">
    <source>
        <dbReference type="HGNC" id="HGNC:14879"/>
    </source>
</evidence>
<evidence type="ECO:0007744" key="23">
    <source>
        <dbReference type="PDB" id="7CUN"/>
    </source>
</evidence>
<evidence type="ECO:0007744" key="24">
    <source>
        <dbReference type="PDB" id="7PKS"/>
    </source>
</evidence>
<evidence type="ECO:0007744" key="25">
    <source>
        <dbReference type="PDB" id="7YCX"/>
    </source>
</evidence>
<evidence type="ECO:0007744" key="26">
    <source>
        <dbReference type="PDB" id="8RBX"/>
    </source>
</evidence>
<evidence type="ECO:0007744" key="27">
    <source>
        <dbReference type="PDB" id="8RBZ"/>
    </source>
</evidence>
<evidence type="ECO:0007744" key="28">
    <source>
        <dbReference type="PDB" id="8RC4"/>
    </source>
</evidence>
<evidence type="ECO:0007744" key="29">
    <source>
    </source>
</evidence>
<evidence type="ECO:0007829" key="30">
    <source>
        <dbReference type="PDB" id="7BV7"/>
    </source>
</evidence>
<evidence type="ECO:0007829" key="31">
    <source>
        <dbReference type="PDB" id="7CUN"/>
    </source>
</evidence>
<evidence type="ECO:0007829" key="32">
    <source>
        <dbReference type="PDB" id="8RC4"/>
    </source>
</evidence>
<dbReference type="EMBL" id="AF097645">
    <property type="protein sequence ID" value="AAF03046.1"/>
    <property type="molecule type" value="mRNA"/>
</dbReference>
<dbReference type="EMBL" id="AL833524">
    <property type="status" value="NOT_ANNOTATED_CDS"/>
    <property type="molecule type" value="mRNA"/>
</dbReference>
<dbReference type="EMBL" id="AL354820">
    <property type="status" value="NOT_ANNOTATED_CDS"/>
    <property type="molecule type" value="Genomic_DNA"/>
</dbReference>
<dbReference type="EMBL" id="AL137780">
    <property type="status" value="NOT_ANNOTATED_CDS"/>
    <property type="molecule type" value="Genomic_DNA"/>
</dbReference>
<dbReference type="EMBL" id="BC013358">
    <property type="protein sequence ID" value="AAH13358.1"/>
    <property type="status" value="ALT_SEQ"/>
    <property type="molecule type" value="mRNA"/>
</dbReference>
<dbReference type="EMBL" id="BC018725">
    <property type="protein sequence ID" value="AAH18725.1"/>
    <property type="molecule type" value="mRNA"/>
</dbReference>
<dbReference type="EMBL" id="BC032386">
    <property type="protein sequence ID" value="AAH32386.1"/>
    <property type="molecule type" value="mRNA"/>
</dbReference>
<dbReference type="EMBL" id="BC039829">
    <property type="protein sequence ID" value="AAH39829.1"/>
    <property type="molecule type" value="mRNA"/>
</dbReference>
<dbReference type="EMBL" id="AF141326">
    <property type="protein sequence ID" value="AAD39481.1"/>
    <property type="molecule type" value="mRNA"/>
</dbReference>
<dbReference type="EMBL" id="AL117626">
    <property type="protein sequence ID" value="CAB56020.1"/>
    <property type="status" value="ALT_INIT"/>
    <property type="molecule type" value="mRNA"/>
</dbReference>
<dbReference type="EMBL" id="BK005730">
    <property type="protein sequence ID" value="DAA05730.1"/>
    <property type="molecule type" value="mRNA"/>
</dbReference>
<dbReference type="CCDS" id="CCDS41890.1">
    <molecule id="Q9UL03-3"/>
</dbReference>
<dbReference type="CCDS" id="CCDS45048.1">
    <molecule id="Q9UL03-2"/>
</dbReference>
<dbReference type="CCDS" id="CCDS9428.1">
    <molecule id="Q9UL03-1"/>
</dbReference>
<dbReference type="PIR" id="T17330">
    <property type="entry name" value="T17330"/>
</dbReference>
<dbReference type="RefSeq" id="NP_001035026.1">
    <molecule id="Q9UL03-3"/>
    <property type="nucleotide sequence ID" value="NM_001039937.2"/>
</dbReference>
<dbReference type="RefSeq" id="NP_001035027.1">
    <molecule id="Q9UL03-2"/>
    <property type="nucleotide sequence ID" value="NM_001039938.2"/>
</dbReference>
<dbReference type="RefSeq" id="NP_001293020.1">
    <property type="nucleotide sequence ID" value="NM_001306091.1"/>
</dbReference>
<dbReference type="RefSeq" id="NP_036273.1">
    <molecule id="Q9UL03-1"/>
    <property type="nucleotide sequence ID" value="NM_012141.3"/>
</dbReference>
<dbReference type="RefSeq" id="XP_011533342.1">
    <molecule id="Q9UL03-1"/>
    <property type="nucleotide sequence ID" value="XM_011535040.4"/>
</dbReference>
<dbReference type="RefSeq" id="XP_054230414.1">
    <molecule id="Q9UL03-1"/>
    <property type="nucleotide sequence ID" value="XM_054374439.1"/>
</dbReference>
<dbReference type="PDB" id="7BV7">
    <property type="method" value="X-ray"/>
    <property type="resolution" value="2.40 A"/>
    <property type="chains" value="C=800-887"/>
</dbReference>
<dbReference type="PDB" id="7CUN">
    <property type="method" value="EM"/>
    <property type="resolution" value="3.50 A"/>
    <property type="chains" value="F=1-887"/>
</dbReference>
<dbReference type="PDB" id="7PKS">
    <property type="method" value="EM"/>
    <property type="resolution" value="3.60 A"/>
    <property type="chains" value="f=1-887"/>
</dbReference>
<dbReference type="PDB" id="7YCX">
    <property type="method" value="EM"/>
    <property type="resolution" value="4.18 A"/>
    <property type="chains" value="F=1-887"/>
</dbReference>
<dbReference type="PDB" id="8RBX">
    <property type="method" value="EM"/>
    <property type="resolution" value="4.10 A"/>
    <property type="chains" value="f=1-887"/>
</dbReference>
<dbReference type="PDB" id="8RBZ">
    <property type="method" value="EM"/>
    <property type="resolution" value="3.70 A"/>
    <property type="chains" value="f=1-887"/>
</dbReference>
<dbReference type="PDB" id="8RC4">
    <property type="method" value="EM"/>
    <property type="resolution" value="3.10 A"/>
    <property type="chains" value="f=1-887"/>
</dbReference>
<dbReference type="PDB" id="8YJB">
    <property type="method" value="EM"/>
    <property type="resolution" value="4.10 A"/>
    <property type="chains" value="F=1-887"/>
</dbReference>
<dbReference type="PDBsum" id="7BV7"/>
<dbReference type="PDBsum" id="7CUN"/>
<dbReference type="PDBsum" id="7PKS"/>
<dbReference type="PDBsum" id="7YCX"/>
<dbReference type="PDBsum" id="8RBX"/>
<dbReference type="PDBsum" id="8RBZ"/>
<dbReference type="PDBsum" id="8RC4"/>
<dbReference type="PDBsum" id="8YJB"/>
<dbReference type="EMDB" id="EMD-13479"/>
<dbReference type="EMDB" id="EMD-19038"/>
<dbReference type="EMDB" id="EMD-19040"/>
<dbReference type="EMDB" id="EMD-19047"/>
<dbReference type="EMDB" id="EMD-30473"/>
<dbReference type="EMDB" id="EMD-33741"/>
<dbReference type="EMDB" id="EMD-39338"/>
<dbReference type="SMR" id="Q9UL03"/>
<dbReference type="BioGRID" id="117717">
    <property type="interactions" value="115"/>
</dbReference>
<dbReference type="ComplexPortal" id="CPX-6441">
    <property type="entry name" value="Integrator complex"/>
</dbReference>
<dbReference type="CORUM" id="Q9UL03"/>
<dbReference type="DIP" id="DIP-38627N"/>
<dbReference type="FunCoup" id="Q9UL03">
    <property type="interactions" value="4153"/>
</dbReference>
<dbReference type="IntAct" id="Q9UL03">
    <property type="interactions" value="65"/>
</dbReference>
<dbReference type="MINT" id="Q9UL03"/>
<dbReference type="STRING" id="9606.ENSP00000310260"/>
<dbReference type="GlyGen" id="Q9UL03">
    <property type="glycosylation" value="2 sites, 1 O-linked glycan (1 site)"/>
</dbReference>
<dbReference type="iPTMnet" id="Q9UL03"/>
<dbReference type="PhosphoSitePlus" id="Q9UL03"/>
<dbReference type="BioMuta" id="INTS6"/>
<dbReference type="DMDM" id="74753376"/>
<dbReference type="jPOST" id="Q9UL03"/>
<dbReference type="MassIVE" id="Q9UL03"/>
<dbReference type="PaxDb" id="9606-ENSP00000310260"/>
<dbReference type="PeptideAtlas" id="Q9UL03"/>
<dbReference type="ProteomicsDB" id="84922">
    <molecule id="Q9UL03-1"/>
</dbReference>
<dbReference type="ProteomicsDB" id="84923">
    <molecule id="Q9UL03-2"/>
</dbReference>
<dbReference type="ProteomicsDB" id="84924">
    <molecule id="Q9UL03-3"/>
</dbReference>
<dbReference type="Pumba" id="Q9UL03"/>
<dbReference type="TopDownProteomics" id="Q9UL03-2">
    <molecule id="Q9UL03-2"/>
</dbReference>
<dbReference type="Antibodypedia" id="730">
    <property type="antibodies" value="147 antibodies from 26 providers"/>
</dbReference>
<dbReference type="DNASU" id="26512"/>
<dbReference type="Ensembl" id="ENST00000311234.9">
    <molecule id="Q9UL03-1"/>
    <property type="protein sequence ID" value="ENSP00000310260.4"/>
    <property type="gene ID" value="ENSG00000102786.15"/>
</dbReference>
<dbReference type="Ensembl" id="ENST00000398119.6">
    <molecule id="Q9UL03-3"/>
    <property type="protein sequence ID" value="ENSP00000381187.2"/>
    <property type="gene ID" value="ENSG00000102786.15"/>
</dbReference>
<dbReference type="Ensembl" id="ENST00000442263.4">
    <molecule id="Q9UL03-2"/>
    <property type="protein sequence ID" value="ENSP00000411245.3"/>
    <property type="gene ID" value="ENSG00000102786.15"/>
</dbReference>
<dbReference type="GeneID" id="26512"/>
<dbReference type="KEGG" id="hsa:26512"/>
<dbReference type="MANE-Select" id="ENST00000311234.9">
    <property type="protein sequence ID" value="ENSP00000310260.4"/>
    <property type="RefSeq nucleotide sequence ID" value="NM_012141.3"/>
    <property type="RefSeq protein sequence ID" value="NP_036273.1"/>
</dbReference>
<dbReference type="UCSC" id="uc001vfj.4">
    <molecule id="Q9UL03-1"/>
    <property type="organism name" value="human"/>
</dbReference>
<dbReference type="AGR" id="HGNC:14879"/>
<dbReference type="CTD" id="26512"/>
<dbReference type="DisGeNET" id="26512"/>
<dbReference type="GeneCards" id="INTS6"/>
<dbReference type="HGNC" id="HGNC:14879">
    <property type="gene designation" value="INTS6"/>
</dbReference>
<dbReference type="HPA" id="ENSG00000102786">
    <property type="expression patterns" value="Low tissue specificity"/>
</dbReference>
<dbReference type="MIM" id="604331">
    <property type="type" value="gene"/>
</dbReference>
<dbReference type="neXtProt" id="NX_Q9UL03"/>
<dbReference type="OpenTargets" id="ENSG00000102786"/>
<dbReference type="PharmGKB" id="PA27212"/>
<dbReference type="VEuPathDB" id="HostDB:ENSG00000102786"/>
<dbReference type="eggNOG" id="KOG3768">
    <property type="taxonomic scope" value="Eukaryota"/>
</dbReference>
<dbReference type="GeneTree" id="ENSGT00390000016655"/>
<dbReference type="HOGENOM" id="CLU_006789_0_0_1"/>
<dbReference type="InParanoid" id="Q9UL03"/>
<dbReference type="OMA" id="LNQNHYG"/>
<dbReference type="OrthoDB" id="9449012at2759"/>
<dbReference type="PAN-GO" id="Q9UL03">
    <property type="GO annotations" value="2 GO annotations based on evolutionary models"/>
</dbReference>
<dbReference type="PhylomeDB" id="Q9UL03"/>
<dbReference type="TreeFam" id="TF323386"/>
<dbReference type="PathwayCommons" id="Q9UL03"/>
<dbReference type="Reactome" id="R-HSA-6807505">
    <property type="pathway name" value="RNA polymerase II transcribes snRNA genes"/>
</dbReference>
<dbReference type="SignaLink" id="Q9UL03"/>
<dbReference type="SIGNOR" id="Q9UL03"/>
<dbReference type="BioGRID-ORCS" id="26512">
    <property type="hits" value="599 hits in 1188 CRISPR screens"/>
</dbReference>
<dbReference type="ChiTaRS" id="INTS6">
    <property type="organism name" value="human"/>
</dbReference>
<dbReference type="GeneWiki" id="INTS6"/>
<dbReference type="GenomeRNAi" id="26512"/>
<dbReference type="Pharos" id="Q9UL03">
    <property type="development level" value="Tbio"/>
</dbReference>
<dbReference type="PRO" id="PR:Q9UL03"/>
<dbReference type="Proteomes" id="UP000005640">
    <property type="component" value="Chromosome 13"/>
</dbReference>
<dbReference type="RNAct" id="Q9UL03">
    <property type="molecule type" value="protein"/>
</dbReference>
<dbReference type="Bgee" id="ENSG00000102786">
    <property type="expression patterns" value="Expressed in secondary oocyte and 186 other cell types or tissues"/>
</dbReference>
<dbReference type="ExpressionAtlas" id="Q9UL03">
    <property type="expression patterns" value="baseline and differential"/>
</dbReference>
<dbReference type="GO" id="GO:0015629">
    <property type="term" value="C:actin cytoskeleton"/>
    <property type="evidence" value="ECO:0000314"/>
    <property type="project" value="HPA"/>
</dbReference>
<dbReference type="GO" id="GO:0000785">
    <property type="term" value="C:chromatin"/>
    <property type="evidence" value="ECO:0000314"/>
    <property type="project" value="UniProtKB"/>
</dbReference>
<dbReference type="GO" id="GO:0160232">
    <property type="term" value="C:INTAC complex"/>
    <property type="evidence" value="ECO:0000314"/>
    <property type="project" value="UniProtKB"/>
</dbReference>
<dbReference type="GO" id="GO:0032039">
    <property type="term" value="C:integrator complex"/>
    <property type="evidence" value="ECO:0000314"/>
    <property type="project" value="UniProtKB"/>
</dbReference>
<dbReference type="GO" id="GO:0005654">
    <property type="term" value="C:nucleoplasm"/>
    <property type="evidence" value="ECO:0000314"/>
    <property type="project" value="HPA"/>
</dbReference>
<dbReference type="GO" id="GO:0005634">
    <property type="term" value="C:nucleus"/>
    <property type="evidence" value="ECO:0000314"/>
    <property type="project" value="UniProtKB"/>
</dbReference>
<dbReference type="GO" id="GO:0030674">
    <property type="term" value="F:protein-macromolecule adaptor activity"/>
    <property type="evidence" value="ECO:0000314"/>
    <property type="project" value="UniProtKB"/>
</dbReference>
<dbReference type="GO" id="GO:0004888">
    <property type="term" value="F:transmembrane signaling receptor activity"/>
    <property type="evidence" value="ECO:0000304"/>
    <property type="project" value="ProtInc"/>
</dbReference>
<dbReference type="GO" id="GO:0071168">
    <property type="term" value="P:protein localization to chromatin"/>
    <property type="evidence" value="ECO:0000314"/>
    <property type="project" value="UniProtKB"/>
</dbReference>
<dbReference type="GO" id="GO:0034243">
    <property type="term" value="P:regulation of transcription elongation by RNA polymerase II"/>
    <property type="evidence" value="ECO:0000303"/>
    <property type="project" value="ComplexPortal"/>
</dbReference>
<dbReference type="GO" id="GO:0160240">
    <property type="term" value="P:RNA polymerase II transcription initiation surveillance"/>
    <property type="evidence" value="ECO:0000314"/>
    <property type="project" value="UniProtKB"/>
</dbReference>
<dbReference type="GO" id="GO:0034472">
    <property type="term" value="P:snRNA 3'-end processing"/>
    <property type="evidence" value="ECO:0000318"/>
    <property type="project" value="GO_Central"/>
</dbReference>
<dbReference type="GO" id="GO:0016180">
    <property type="term" value="P:snRNA processing"/>
    <property type="evidence" value="ECO:0000314"/>
    <property type="project" value="HGNC-UCL"/>
</dbReference>
<dbReference type="CDD" id="cd00198">
    <property type="entry name" value="vWFA"/>
    <property type="match status" value="1"/>
</dbReference>
<dbReference type="FunFam" id="3.40.50.410:FF:000010">
    <property type="entry name" value="Integrator complex subunit 6 like"/>
    <property type="match status" value="1"/>
</dbReference>
<dbReference type="Gene3D" id="3.40.50.410">
    <property type="entry name" value="von Willebrand factor, type A domain"/>
    <property type="match status" value="1"/>
</dbReference>
<dbReference type="InterPro" id="IPR029307">
    <property type="entry name" value="INT_SG_DDX_CT_C"/>
</dbReference>
<dbReference type="InterPro" id="IPR051113">
    <property type="entry name" value="Integrator_subunit6"/>
</dbReference>
<dbReference type="InterPro" id="IPR002035">
    <property type="entry name" value="VWF_A"/>
</dbReference>
<dbReference type="InterPro" id="IPR036465">
    <property type="entry name" value="vWFA_dom_sf"/>
</dbReference>
<dbReference type="PANTHER" id="PTHR12957">
    <property type="entry name" value="DEAD/H BOX POLYPEPTIDE 26/DICE1-RELATED"/>
    <property type="match status" value="1"/>
</dbReference>
<dbReference type="PANTHER" id="PTHR12957:SF23">
    <property type="entry name" value="INTEGRATOR COMPLEX SUBUNIT 6"/>
    <property type="match status" value="1"/>
</dbReference>
<dbReference type="Pfam" id="PF25462">
    <property type="entry name" value="Beta-barrel_INTS6"/>
    <property type="match status" value="1"/>
</dbReference>
<dbReference type="Pfam" id="PF15300">
    <property type="entry name" value="INT_SG_DDX_CT_C"/>
    <property type="match status" value="1"/>
</dbReference>
<dbReference type="Pfam" id="PF13519">
    <property type="entry name" value="VWA_2"/>
    <property type="match status" value="1"/>
</dbReference>
<dbReference type="SUPFAM" id="SSF53300">
    <property type="entry name" value="vWA-like"/>
    <property type="match status" value="1"/>
</dbReference>
<dbReference type="PROSITE" id="PS50234">
    <property type="entry name" value="VWFA"/>
    <property type="match status" value="1"/>
</dbReference>
<proteinExistence type="evidence at protein level"/>
<name>INT6_HUMAN</name>
<protein>
    <recommendedName>
        <fullName evidence="21">Integrator complex subunit 6</fullName>
        <shortName>Int6</shortName>
    </recommendedName>
    <alternativeName>
        <fullName evidence="20">DBI-1</fullName>
    </alternativeName>
    <alternativeName>
        <fullName evidence="15">Protein deleted in cancer 1</fullName>
        <shortName evidence="15">DICE1</shortName>
    </alternativeName>
</protein>
<keyword id="KW-0002">3D-structure</keyword>
<keyword id="KW-0025">Alternative splicing</keyword>
<keyword id="KW-0158">Chromosome</keyword>
<keyword id="KW-0539">Nucleus</keyword>
<keyword id="KW-0597">Phosphoprotein</keyword>
<keyword id="KW-1267">Proteomics identification</keyword>
<keyword id="KW-1185">Reference proteome</keyword>
<sequence length="887" mass="100390">MPILLFLIDTSASMNQRSHLGTTYLDTAKGAVETFMKLRARDPASRGDRYMLVTFEEPPYAIKAGWKENHATFMNELKNLQAEGLTTLGQSLRTAFDLLNLNRLVTGIDNYGQGRNPFFLEPAIIITITDGSKLTTTSGVQDELHLPLNSPLPGSELTKEPFRWDQRLFALVLRLPGTMSVESEQLTGVPLDDSAITPMCEVTGGRSYSVCSPRMLNQCLESLVQKVQSGVVINFEKAGPDPSPVEDGQPDISRPFGSQPWHSCHKLIYVRPNPKTGVPIGHWPVPESFWPDQNSPTLPPRTSHPVVKFSCTDCEPMVIDKLPFDKYELEPSPLTQFILERKSPQTCWQVYVSNSAKYSELGHPFGYLKASTALNCVNLFVMPYNYPVLLPLLDDLFKVHKAKPTLKWRQSFESYLKTMPPYYLGPLKKAVRMMGAPNLIADSMEYGLSYSVISYLKKLSQQAKIESDRVIGSVGKKVVQETGIKVRSRSHGLSMAYRKDFQQLLQGISEDVPHRLLDLNMKEYTGFQVALLNKDLKPQTFRNAYDIPRRNLLDHLTRMRSNLLKSTRRFLKGQDEDQVHSVPIAQMGNYQEYLKQVPSPLRELDPDQPRRLHTFGNPFKLDKKGMMIDEADEFVAGPQNKHKRPGEPNMQGIPKRRRCMSPLLRGRQQNPVVNNHIGGKGPPAPTTQAQPDLIKPLPLHKISETTNDSIIHDVVENHVADQLSSDITPNAMDTEFSASSPASLLERPTNHMEALGHDHLGTNDLTVGGFLENHEEPRDKEQCAEENIPASSLNKGKKLMHCRSHEEVNTELKAQIMKEIRKPGRKYERIFTLLKHVQGSLQTRLIFLQNVIKEASRFKKRMLIEQLENFLDEIHRRANQINHINSN</sequence>
<feature type="chain" id="PRO_0000259543" description="Integrator complex subunit 6">
    <location>
        <begin position="1"/>
        <end position="887"/>
    </location>
</feature>
<feature type="domain" description="VWFA" evidence="1">
    <location>
        <begin position="3"/>
        <end position="227"/>
    </location>
</feature>
<feature type="short sequence motif" description="Inhibitory loop" evidence="12">
    <location>
        <begin position="626"/>
        <end position="633"/>
    </location>
</feature>
<feature type="modified residue" description="Phosphoserine" evidence="29">
    <location>
        <position position="804"/>
    </location>
</feature>
<feature type="splice variant" id="VSP_041356" description="In isoform 3." evidence="18">
    <location>
        <begin position="1"/>
        <end position="13"/>
    </location>
</feature>
<feature type="splice variant" id="VSP_021457" description="In isoform 2." evidence="17">
    <original>GR</original>
    <variation>VG</variation>
    <location>
        <begin position="114"/>
        <end position="115"/>
    </location>
</feature>
<feature type="splice variant" id="VSP_021458" description="In isoform 2." evidence="17">
    <location>
        <begin position="116"/>
        <end position="887"/>
    </location>
</feature>
<feature type="sequence conflict" description="In Ref. 5; AAD39481." evidence="21" ref="5">
    <original>N</original>
    <variation>R</variation>
    <location>
        <position position="273"/>
    </location>
</feature>
<feature type="strand" evidence="32">
    <location>
        <begin position="3"/>
        <end position="8"/>
    </location>
</feature>
<feature type="helix" evidence="32">
    <location>
        <begin position="12"/>
        <end position="15"/>
    </location>
</feature>
<feature type="strand" evidence="32">
    <location>
        <begin position="21"/>
        <end position="23"/>
    </location>
</feature>
<feature type="helix" evidence="32">
    <location>
        <begin position="24"/>
        <end position="39"/>
    </location>
</feature>
<feature type="helix" evidence="32">
    <location>
        <begin position="43"/>
        <end position="45"/>
    </location>
</feature>
<feature type="strand" evidence="32">
    <location>
        <begin position="49"/>
        <end position="53"/>
    </location>
</feature>
<feature type="helix" evidence="32">
    <location>
        <begin position="58"/>
        <end position="61"/>
    </location>
</feature>
<feature type="strand" evidence="32">
    <location>
        <begin position="62"/>
        <end position="64"/>
    </location>
</feature>
<feature type="helix" evidence="32">
    <location>
        <begin position="70"/>
        <end position="78"/>
    </location>
</feature>
<feature type="helix" evidence="32">
    <location>
        <begin position="88"/>
        <end position="99"/>
    </location>
</feature>
<feature type="helix" evidence="32">
    <location>
        <begin position="103"/>
        <end position="106"/>
    </location>
</feature>
<feature type="turn" evidence="32">
    <location>
        <begin position="107"/>
        <end position="109"/>
    </location>
</feature>
<feature type="strand" evidence="31">
    <location>
        <begin position="111"/>
        <end position="113"/>
    </location>
</feature>
<feature type="strand" evidence="32">
    <location>
        <begin position="123"/>
        <end position="131"/>
    </location>
</feature>
<feature type="strand" evidence="32">
    <location>
        <begin position="140"/>
        <end position="143"/>
    </location>
</feature>
<feature type="helix" evidence="32">
    <location>
        <begin position="155"/>
        <end position="157"/>
    </location>
</feature>
<feature type="strand" evidence="32">
    <location>
        <begin position="158"/>
        <end position="162"/>
    </location>
</feature>
<feature type="strand" evidence="32">
    <location>
        <begin position="166"/>
        <end position="173"/>
    </location>
</feature>
<feature type="helix" evidence="32">
    <location>
        <begin position="196"/>
        <end position="203"/>
    </location>
</feature>
<feature type="strand" evidence="32">
    <location>
        <begin position="207"/>
        <end position="210"/>
    </location>
</feature>
<feature type="helix" evidence="32">
    <location>
        <begin position="213"/>
        <end position="225"/>
    </location>
</feature>
<feature type="strand" evidence="32">
    <location>
        <begin position="230"/>
        <end position="240"/>
    </location>
</feature>
<feature type="turn" evidence="31">
    <location>
        <begin position="245"/>
        <end position="247"/>
    </location>
</feature>
<feature type="turn" evidence="32">
    <location>
        <begin position="260"/>
        <end position="262"/>
    </location>
</feature>
<feature type="strand" evidence="32">
    <location>
        <begin position="263"/>
        <end position="269"/>
    </location>
</feature>
<feature type="strand" evidence="32">
    <location>
        <begin position="306"/>
        <end position="310"/>
    </location>
</feature>
<feature type="strand" evidence="32">
    <location>
        <begin position="325"/>
        <end position="329"/>
    </location>
</feature>
<feature type="helix" evidence="32">
    <location>
        <begin position="333"/>
        <end position="341"/>
    </location>
</feature>
<feature type="strand" evidence="32">
    <location>
        <begin position="347"/>
        <end position="352"/>
    </location>
</feature>
<feature type="strand" evidence="32">
    <location>
        <begin position="356"/>
        <end position="358"/>
    </location>
</feature>
<feature type="strand" evidence="32">
    <location>
        <begin position="364"/>
        <end position="370"/>
    </location>
</feature>
<feature type="strand" evidence="32">
    <location>
        <begin position="377"/>
        <end position="381"/>
    </location>
</feature>
<feature type="helix" evidence="32">
    <location>
        <begin position="386"/>
        <end position="398"/>
    </location>
</feature>
<feature type="strand" evidence="32">
    <location>
        <begin position="400"/>
        <end position="402"/>
    </location>
</feature>
<feature type="helix" evidence="32">
    <location>
        <begin position="406"/>
        <end position="417"/>
    </location>
</feature>
<feature type="helix" evidence="32">
    <location>
        <begin position="421"/>
        <end position="423"/>
    </location>
</feature>
<feature type="helix" evidence="32">
    <location>
        <begin position="424"/>
        <end position="434"/>
    </location>
</feature>
<feature type="helix" evidence="32">
    <location>
        <begin position="437"/>
        <end position="439"/>
    </location>
</feature>
<feature type="strand" evidence="31">
    <location>
        <begin position="440"/>
        <end position="442"/>
    </location>
</feature>
<feature type="turn" evidence="31">
    <location>
        <begin position="447"/>
        <end position="449"/>
    </location>
</feature>
<feature type="helix" evidence="32">
    <location>
        <begin position="450"/>
        <end position="473"/>
    </location>
</feature>
<feature type="turn" evidence="32">
    <location>
        <begin position="540"/>
        <end position="542"/>
    </location>
</feature>
<feature type="helix" evidence="32">
    <location>
        <begin position="544"/>
        <end position="546"/>
    </location>
</feature>
<feature type="helix" evidence="32">
    <location>
        <begin position="552"/>
        <end position="564"/>
    </location>
</feature>
<feature type="turn" evidence="32">
    <location>
        <begin position="565"/>
        <end position="568"/>
    </location>
</feature>
<feature type="turn" evidence="32">
    <location>
        <begin position="575"/>
        <end position="577"/>
    </location>
</feature>
<feature type="strand" evidence="32">
    <location>
        <begin position="578"/>
        <end position="580"/>
    </location>
</feature>
<feature type="helix" evidence="32">
    <location>
        <begin position="584"/>
        <end position="586"/>
    </location>
</feature>
<feature type="helix" evidence="32">
    <location>
        <begin position="590"/>
        <end position="595"/>
    </location>
</feature>
<feature type="helix" evidence="30">
    <location>
        <begin position="809"/>
        <end position="820"/>
    </location>
</feature>
<feature type="strand" evidence="30">
    <location>
        <begin position="822"/>
        <end position="824"/>
    </location>
</feature>
<feature type="helix" evidence="30">
    <location>
        <begin position="828"/>
        <end position="834"/>
    </location>
</feature>
<feature type="helix" evidence="30">
    <location>
        <begin position="841"/>
        <end position="857"/>
    </location>
</feature>
<feature type="helix" evidence="30">
    <location>
        <begin position="861"/>
        <end position="880"/>
    </location>
</feature>